<name>SORF2_CAEEL</name>
<comment type="function">
    <text evidence="2">Together with sorf-1 negatively regulates the levels of phosphatidylinositol 3-phosphate (PtdIns3P) to enable the conversion of early endosomes to late endosomes. Binds to sorf-1 and the sorf-1-sorf-2 complex likely acts through bec-1, a non-catalytic subunit of phosphatidylinositol 3-kinase (PI3K), to suppress PI3K activity, thereby negatively regulating endosomal PtdIns3P levels.</text>
</comment>
<comment type="subunit">
    <text evidence="2">Interacts with sorf-1; the interaction is direct. Interacts with bec-1.</text>
</comment>
<comment type="interaction">
    <interactant intactId="EBI-13941960">
        <id>Q10122</id>
    </interactant>
    <interactant intactId="EBI-2413500">
        <id>Q22592</id>
        <label>bec-1</label>
    </interactant>
    <organismsDiffer>false</organismsDiffer>
    <experiments>3</experiments>
</comment>
<comment type="interaction">
    <interactant intactId="EBI-13941960">
        <id>Q10122</id>
    </interactant>
    <interactant intactId="EBI-13941886">
        <id>Q23533</id>
        <label>sorf-1</label>
    </interactant>
    <organismsDiffer>false</organismsDiffer>
    <experiments>2</experiments>
</comment>
<comment type="subcellular location">
    <subcellularLocation>
        <location evidence="5">Early endosome</location>
    </subcellularLocation>
    <subcellularLocation>
        <location evidence="5">Late endosome</location>
    </subcellularLocation>
    <subcellularLocation>
        <location evidence="2">Cytoplasm</location>
    </subcellularLocation>
</comment>
<comment type="disruption phenotype">
    <text evidence="2">Coelomocytes contain larger early and late endosomes enriched with PtdIns3P. Delayed conversion of early endosomes to late endosomes with early endosomes retaining PtdInsP3 for a longer duration of time which may possibly be due to a delay in either the turnover or transport of PtdIns3P out of the endosome. This leads to continuous fusion of early endosomes which continues until rab-5 is displaced and rab-7 is recruited. Double knockout with sorf-1 results in a similar phenotype as the individual single sorf-2 knockout. Double knockout with bec-1 results in smaller endosomes and an irregular distribution pattern of PtdIns3P in the cytoplasm. Double knockout with vps-18, a subunit of the CORVET/HOPS complex, results in larger endosomes and larger lysosomes and thus suppresses the endosome/lysosome fusion defect in the vps-18 single mutant. Likewise, RNAi-mediated knockdown in a vps-11, vps-39 or vps-41 mutant background (subunits of the CORVET/HOPS complex) also suppresses the endosome/lysosome fusion defects in the vps-11, vps-39 and vps-41 single mutants. However, RNAi-mediated knockout in a mutant background of the CORVET/HOPS complex subunits vps-16 or vps-33.1, does not suppress the endosome/lysosome fusion defects in the individual vps-16 and vps-33.1 single mutants. Double knockout with proteins involved in rab-5 to rab-7 switching in early to late endosome conversion such as rab-7, sand-1 and tbc-2 results in enlarged vacuoles, delayed endosomal cargo transport and persistent PtdIns3P in early endosomes in coelomocytes.</text>
</comment>
<comment type="similarity">
    <text evidence="4">Belongs to the WD repeat WDR81 family.</text>
</comment>
<organism>
    <name type="scientific">Caenorhabditis elegans</name>
    <dbReference type="NCBI Taxonomy" id="6239"/>
    <lineage>
        <taxon>Eukaryota</taxon>
        <taxon>Metazoa</taxon>
        <taxon>Ecdysozoa</taxon>
        <taxon>Nematoda</taxon>
        <taxon>Chromadorea</taxon>
        <taxon>Rhabditida</taxon>
        <taxon>Rhabditina</taxon>
        <taxon>Rhabditomorpha</taxon>
        <taxon>Rhabditoidea</taxon>
        <taxon>Rhabditidae</taxon>
        <taxon>Peloderinae</taxon>
        <taxon>Caenorhabditis</taxon>
    </lineage>
</organism>
<sequence>MPEEEFEWNESKLNALSEILTQWAPHDELKLENVILEAKMAWIHESTDAVALEKEFEKLLNTSFDPLMDYEEHQRVKNGVCSPAKSTKLDWITKWANIAEKLSISHINCSKAPHKTINFQRLQILPNMTSILAIAHTEADNVILIYGHTKEGIDFQTVLRHSYSNIPDGSLQTIHFLTKNLLDLYSQLFSRKITAEFKTRHFRCLPSFWLQYDVLAPIFEQFRAPRAPRIPLDEATSNWANRKWENYQYLTYLNDITGRVRGEVHNHPIFPWVCDFSEENGGFRQLNRTKYRLCKGDDQLREMYSREPSHHVPELLSDIGYMVYRARVEPKDNLCRHVRRKWVPEEYPSTMSRMYQWTPDECIPEFYDDPSIFNSCHPDMADLRFPEFVSSPQEFIEWHRKMLEHEEVSMNLHRWIDLVFGFNLAIDNSKNALNLHLCFVEKNRRGLRTTGMVQLFNRPHPIRMPLNYDPKLDNYHLKMESFGFGMTSEHRKEPEVEPDEDSHYQIYQKIKKVRRLRHNTYFSSMVSAMEVMAQIVLAPHLAGRFDDPDHIRRCIQLYSYRIPANYRRLFDFLFNTEQDFPDCDEFSFFVSVRLNIPTKILNFSEEFGKCVSLHILRKLDVIPPFSKRSQLIILKEVESLKKSIRLCDHMEQCVVAAFQQLLEDEEACIQSVHRLMPVITRSLSQSALEDLINPMIELIQCETSVKLLDRRFLMHVSICYGTHTFLDLFLPPIVEACASMNCDRSVVAKESIMWLAKRYGPVICAKFISSNVLRIMASCYEAFEMVGLEQQPKAVFNVVLQGDETCSRIESLLSEIVLTYSVTFITVQFLPFCVDLIEQFHKRSSVQLEPGLVSVFRIVELSIRSMSDHQLMNYLEEFIIQKVIYRVLTILLDASFQFSSMRVRIIIICKVCQLLHSITQKIGTENTRIYANQPFKLMFSTFSEIYETDEELRINLRKRPSENTLFEVPLWMVEDVVDKFAKEWGVPFLSSFCDDPAFLIPFVSNSSSSSSPPASIAHSPPSAFTAYSLGGMSSGNRLFSLSASSPVNSVNSLGGLSFCDSGSLSAVWCARVSAAVCGVDNYRFDHLSLCNYTGHQEKIRKLAAISNENSFVSASSDKTVKLWSIKPELDEIGCQWTYQKHTRPVHDITILADNSIASTDGVLHVWDPFRTTLLAQMEWDSKEGSGGNIMRVENVDRHILSAICSLHSTVKLFDSRVGGWTCELKVSPGPGLTRAITVRDKGNKMAVALSNGTLAILDARNGKINALAQTNSTHTVSVNWLSDTRLLVCDADECGIFLETNPRAHIVRKLQDPVSAACLTDNSLVTLQNGTILRVYRNSGELQIETKIRPDELPGTPTAVLPLPLNCSYLIGSSHGAIRLMC</sequence>
<dbReference type="EMBL" id="BX284603">
    <property type="protein sequence ID" value="CCD71617.2"/>
    <property type="molecule type" value="Genomic_DNA"/>
</dbReference>
<dbReference type="PIR" id="T16423">
    <property type="entry name" value="T16423"/>
</dbReference>
<dbReference type="RefSeq" id="NP_001254925.1">
    <property type="nucleotide sequence ID" value="NM_001267996.1"/>
</dbReference>
<dbReference type="RefSeq" id="NP_001367877.1">
    <property type="nucleotide sequence ID" value="NM_001379708.3"/>
</dbReference>
<dbReference type="SMR" id="Q10122"/>
<dbReference type="BioGRID" id="532355">
    <property type="interactions" value="5"/>
</dbReference>
<dbReference type="ComplexPortal" id="CPX-1059">
    <property type="entry name" value="Sorf-1-Sorf-2 complex"/>
</dbReference>
<dbReference type="FunCoup" id="Q10122">
    <property type="interactions" value="1818"/>
</dbReference>
<dbReference type="IntAct" id="Q10122">
    <property type="interactions" value="2"/>
</dbReference>
<dbReference type="STRING" id="6239.F52C9.1.1"/>
<dbReference type="PaxDb" id="6239-F52C9.1.2"/>
<dbReference type="PeptideAtlas" id="Q10122"/>
<dbReference type="EnsemblMetazoa" id="F52C9.1.1">
    <property type="protein sequence ID" value="F52C9.1.1"/>
    <property type="gene ID" value="WBGene00018672"/>
</dbReference>
<dbReference type="GeneID" id="3565037"/>
<dbReference type="UCSC" id="F52C9.1b">
    <property type="organism name" value="c. elegans"/>
</dbReference>
<dbReference type="AGR" id="WB:WBGene00018672"/>
<dbReference type="WormBase" id="F52C9.1">
    <property type="protein sequence ID" value="CE54107"/>
    <property type="gene ID" value="WBGene00018672"/>
    <property type="gene designation" value="sorf-2"/>
</dbReference>
<dbReference type="eggNOG" id="KOG1786">
    <property type="taxonomic scope" value="Eukaryota"/>
</dbReference>
<dbReference type="eggNOG" id="KOG4190">
    <property type="taxonomic scope" value="Eukaryota"/>
</dbReference>
<dbReference type="eggNOG" id="KOG4435">
    <property type="taxonomic scope" value="Eukaryota"/>
</dbReference>
<dbReference type="InParanoid" id="Q10122"/>
<dbReference type="OrthoDB" id="29306at2759"/>
<dbReference type="PRO" id="PR:Q10122"/>
<dbReference type="Proteomes" id="UP000001940">
    <property type="component" value="Chromosome III"/>
</dbReference>
<dbReference type="Bgee" id="WBGene00018672">
    <property type="expression patterns" value="Expressed in embryo and 3 other cell types or tissues"/>
</dbReference>
<dbReference type="GO" id="GO:0005829">
    <property type="term" value="C:cytosol"/>
    <property type="evidence" value="ECO:0000250"/>
    <property type="project" value="UniProtKB"/>
</dbReference>
<dbReference type="GO" id="GO:0005769">
    <property type="term" value="C:early endosome"/>
    <property type="evidence" value="ECO:0000314"/>
    <property type="project" value="UniProtKB"/>
</dbReference>
<dbReference type="GO" id="GO:0031905">
    <property type="term" value="C:early endosome lumen"/>
    <property type="evidence" value="ECO:0000314"/>
    <property type="project" value="ComplexPortal"/>
</dbReference>
<dbReference type="GO" id="GO:0031901">
    <property type="term" value="C:early endosome membrane"/>
    <property type="evidence" value="ECO:0000250"/>
    <property type="project" value="UniProtKB"/>
</dbReference>
<dbReference type="GO" id="GO:0010008">
    <property type="term" value="C:endosome membrane"/>
    <property type="evidence" value="ECO:0000250"/>
    <property type="project" value="UniProtKB"/>
</dbReference>
<dbReference type="GO" id="GO:0005770">
    <property type="term" value="C:late endosome"/>
    <property type="evidence" value="ECO:0000314"/>
    <property type="project" value="UniProtKB"/>
</dbReference>
<dbReference type="GO" id="GO:0031906">
    <property type="term" value="C:late endosome lumen"/>
    <property type="evidence" value="ECO:0000314"/>
    <property type="project" value="ComplexPortal"/>
</dbReference>
<dbReference type="GO" id="GO:0031902">
    <property type="term" value="C:late endosome membrane"/>
    <property type="evidence" value="ECO:0000250"/>
    <property type="project" value="UniProtKB"/>
</dbReference>
<dbReference type="GO" id="GO:0141039">
    <property type="term" value="F:phosphatidylinositol 3-kinase inhibitor activity"/>
    <property type="evidence" value="ECO:0000250"/>
    <property type="project" value="UniProtKB"/>
</dbReference>
<dbReference type="GO" id="GO:0045022">
    <property type="term" value="P:early endosome to late endosome transport"/>
    <property type="evidence" value="ECO:0000250"/>
    <property type="project" value="UniProtKB"/>
</dbReference>
<dbReference type="GO" id="GO:0016197">
    <property type="term" value="P:endosomal transport"/>
    <property type="evidence" value="ECO:0000314"/>
    <property type="project" value="ComplexPortal"/>
</dbReference>
<dbReference type="GO" id="GO:0048284">
    <property type="term" value="P:organelle fusion"/>
    <property type="evidence" value="ECO:0000316"/>
    <property type="project" value="UniProtKB"/>
</dbReference>
<dbReference type="GO" id="GO:2000643">
    <property type="term" value="P:positive regulation of early endosome to late endosome transport"/>
    <property type="evidence" value="ECO:0000315"/>
    <property type="project" value="UniProtKB"/>
</dbReference>
<dbReference type="CDD" id="cd06071">
    <property type="entry name" value="Beach"/>
    <property type="match status" value="1"/>
</dbReference>
<dbReference type="FunFam" id="2.130.10.10:FF:002165">
    <property type="entry name" value="Suppressor of organelle fusion 2"/>
    <property type="match status" value="1"/>
</dbReference>
<dbReference type="Gene3D" id="1.10.1540.10">
    <property type="entry name" value="BEACH domain"/>
    <property type="match status" value="1"/>
</dbReference>
<dbReference type="Gene3D" id="2.130.10.10">
    <property type="entry name" value="YVTN repeat-like/Quinoprotein amine dehydrogenase"/>
    <property type="match status" value="1"/>
</dbReference>
<dbReference type="InterPro" id="IPR000409">
    <property type="entry name" value="BEACH_dom"/>
</dbReference>
<dbReference type="InterPro" id="IPR036372">
    <property type="entry name" value="BEACH_dom_sf"/>
</dbReference>
<dbReference type="InterPro" id="IPR015943">
    <property type="entry name" value="WD40/YVTN_repeat-like_dom_sf"/>
</dbReference>
<dbReference type="InterPro" id="IPR036322">
    <property type="entry name" value="WD40_repeat_dom_sf"/>
</dbReference>
<dbReference type="InterPro" id="IPR001680">
    <property type="entry name" value="WD40_rpt"/>
</dbReference>
<dbReference type="PANTHER" id="PTHR46866">
    <property type="entry name" value="GH12955P"/>
    <property type="match status" value="1"/>
</dbReference>
<dbReference type="PANTHER" id="PTHR46866:SF1">
    <property type="entry name" value="GH12955P"/>
    <property type="match status" value="1"/>
</dbReference>
<dbReference type="Pfam" id="PF02138">
    <property type="entry name" value="Beach"/>
    <property type="match status" value="1"/>
</dbReference>
<dbReference type="Pfam" id="PF00400">
    <property type="entry name" value="WD40"/>
    <property type="match status" value="1"/>
</dbReference>
<dbReference type="SMART" id="SM01026">
    <property type="entry name" value="Beach"/>
    <property type="match status" value="1"/>
</dbReference>
<dbReference type="SMART" id="SM00320">
    <property type="entry name" value="WD40"/>
    <property type="match status" value="2"/>
</dbReference>
<dbReference type="SUPFAM" id="SSF81837">
    <property type="entry name" value="BEACH domain"/>
    <property type="match status" value="1"/>
</dbReference>
<dbReference type="SUPFAM" id="SSF50978">
    <property type="entry name" value="WD40 repeat-like"/>
    <property type="match status" value="1"/>
</dbReference>
<dbReference type="PROSITE" id="PS50082">
    <property type="entry name" value="WD_REPEATS_2"/>
    <property type="match status" value="1"/>
</dbReference>
<dbReference type="PROSITE" id="PS50294">
    <property type="entry name" value="WD_REPEATS_REGION"/>
    <property type="match status" value="1"/>
</dbReference>
<evidence type="ECO:0000255" key="1"/>
<evidence type="ECO:0000269" key="2">
    <source>
    </source>
</evidence>
<evidence type="ECO:0000303" key="3">
    <source>
    </source>
</evidence>
<evidence type="ECO:0000305" key="4"/>
<evidence type="ECO:0000305" key="5">
    <source>
    </source>
</evidence>
<evidence type="ECO:0000312" key="6">
    <source>
        <dbReference type="WormBase" id="F52C9.1"/>
    </source>
</evidence>
<keyword id="KW-0963">Cytoplasm</keyword>
<keyword id="KW-0967">Endosome</keyword>
<keyword id="KW-1185">Reference proteome</keyword>
<keyword id="KW-0677">Repeat</keyword>
<keyword id="KW-0853">WD repeat</keyword>
<feature type="chain" id="PRO_0000065355" description="Suppressor of organelle fusion 2">
    <location>
        <begin position="1"/>
        <end position="1382"/>
    </location>
</feature>
<feature type="domain" description="BEACH" evidence="1">
    <location>
        <begin position="229"/>
        <end position="463"/>
    </location>
</feature>
<feature type="repeat" description="WD 1" evidence="1">
    <location>
        <begin position="1094"/>
        <end position="1133"/>
    </location>
</feature>
<feature type="repeat" description="WD 2" evidence="1">
    <location>
        <begin position="1140"/>
        <end position="1176"/>
    </location>
</feature>
<accession>Q10122</accession>
<accession>D7SFK0</accession>
<accession>Q45EK8</accession>
<accession>Q45EK9</accession>
<reference key="1">
    <citation type="journal article" date="1998" name="Science">
        <title>Genome sequence of the nematode C. elegans: a platform for investigating biology.</title>
        <authorList>
            <consortium name="The C. elegans sequencing consortium"/>
        </authorList>
    </citation>
    <scope>NUCLEOTIDE SEQUENCE [LARGE SCALE GENOMIC DNA]</scope>
    <source>
        <strain>Bristol N2</strain>
    </source>
</reference>
<reference key="2">
    <citation type="journal article" date="2016" name="J. Cell Biol.">
        <title>Negative regulation of phosphatidylinositol 3-phosphate levels in early-to-late endosome conversion.</title>
        <authorList>
            <person name="Liu K."/>
            <person name="Jian Y."/>
            <person name="Sun X."/>
            <person name="Yang C."/>
            <person name="Gao Z."/>
            <person name="Zhang Z."/>
            <person name="Liu X."/>
            <person name="Li Y."/>
            <person name="Xu J."/>
            <person name="Jing Y."/>
            <person name="Mitani S."/>
            <person name="He S."/>
            <person name="Yang C."/>
        </authorList>
    </citation>
    <scope>FUNCTION</scope>
    <scope>INTERACTION WITH SORF-1 AND BEC-1</scope>
    <scope>SUBCELLULAR LOCATION</scope>
    <scope>DISRUPTION PHENOTYPE</scope>
</reference>
<reference key="3">
    <citation type="journal article" date="2016" name="J. Cell Biol.">
        <title>Correction: Negative regulation of phosphatidylinositol 3-phosphate levels in early-to-late endosome conversion.</title>
        <authorList>
            <person name="Liu K."/>
            <person name="Jian Y."/>
            <person name="Sun X."/>
            <person name="Yang C."/>
            <person name="Gao Z."/>
            <person name="Zhang Z."/>
            <person name="Liu X."/>
            <person name="Li Y."/>
            <person name="Xu J."/>
            <person name="Jing Y."/>
            <person name="Mitani S."/>
            <person name="He S."/>
            <person name="Yang C."/>
        </authorList>
    </citation>
    <scope>ERRATUM OF PUBMED:26783301</scope>
</reference>
<gene>
    <name evidence="3 6" type="primary">sorf-2</name>
    <name evidence="6" type="ORF">F52C9.1</name>
</gene>
<proteinExistence type="evidence at protein level"/>
<protein>
    <recommendedName>
        <fullName evidence="3">Suppressor of organelle fusion 2</fullName>
    </recommendedName>
    <alternativeName>
        <fullName evidence="4">WD repeat-containing protein 81 homolog sorf-2</fullName>
    </alternativeName>
</protein>